<organism>
    <name type="scientific">Yersinia pestis bv. Antiqua (strain Antiqua)</name>
    <dbReference type="NCBI Taxonomy" id="360102"/>
    <lineage>
        <taxon>Bacteria</taxon>
        <taxon>Pseudomonadati</taxon>
        <taxon>Pseudomonadota</taxon>
        <taxon>Gammaproteobacteria</taxon>
        <taxon>Enterobacterales</taxon>
        <taxon>Yersiniaceae</taxon>
        <taxon>Yersinia</taxon>
    </lineage>
</organism>
<name>ZAPA_YERPA</name>
<sequence>MSAQPVDIQVFGRSLRVNCPPEQQDALNMAAEDLSQRLQDLKVRTRVNNTEQLVFIAALNVCHELAQERLKTRDYASNMEQRIRMLQQTIEQALLEQGRISDRQDTQFE</sequence>
<evidence type="ECO:0000255" key="1">
    <source>
        <dbReference type="HAMAP-Rule" id="MF_02012"/>
    </source>
</evidence>
<keyword id="KW-0131">Cell cycle</keyword>
<keyword id="KW-0132">Cell division</keyword>
<keyword id="KW-0175">Coiled coil</keyword>
<keyword id="KW-0963">Cytoplasm</keyword>
<keyword id="KW-0717">Septation</keyword>
<reference key="1">
    <citation type="journal article" date="2006" name="J. Bacteriol.">
        <title>Complete genome sequence of Yersinia pestis strains Antiqua and Nepal516: evidence of gene reduction in an emerging pathogen.</title>
        <authorList>
            <person name="Chain P.S.G."/>
            <person name="Hu P."/>
            <person name="Malfatti S.A."/>
            <person name="Radnedge L."/>
            <person name="Larimer F."/>
            <person name="Vergez L.M."/>
            <person name="Worsham P."/>
            <person name="Chu M.C."/>
            <person name="Andersen G.L."/>
        </authorList>
    </citation>
    <scope>NUCLEOTIDE SEQUENCE [LARGE SCALE GENOMIC DNA]</scope>
    <source>
        <strain>Antiqua</strain>
    </source>
</reference>
<accession>Q1CB49</accession>
<feature type="chain" id="PRO_0000345668" description="Cell division protein ZapA">
    <location>
        <begin position="1"/>
        <end position="109"/>
    </location>
</feature>
<feature type="coiled-coil region" evidence="1">
    <location>
        <begin position="22"/>
        <end position="99"/>
    </location>
</feature>
<protein>
    <recommendedName>
        <fullName evidence="1">Cell division protein ZapA</fullName>
    </recommendedName>
    <alternativeName>
        <fullName evidence="1">Z ring-associated protein ZapA</fullName>
    </alternativeName>
</protein>
<proteinExistence type="inferred from homology"/>
<dbReference type="EMBL" id="CP000308">
    <property type="protein sequence ID" value="ABG12323.1"/>
    <property type="molecule type" value="Genomic_DNA"/>
</dbReference>
<dbReference type="PIR" id="AI0111">
    <property type="entry name" value="AI0111"/>
</dbReference>
<dbReference type="RefSeq" id="WP_002209954.1">
    <property type="nucleotide sequence ID" value="NZ_CP009906.1"/>
</dbReference>
<dbReference type="SMR" id="Q1CB49"/>
<dbReference type="GeneID" id="96662508"/>
<dbReference type="KEGG" id="ypa:YPA_0355"/>
<dbReference type="Proteomes" id="UP000001971">
    <property type="component" value="Chromosome"/>
</dbReference>
<dbReference type="GO" id="GO:0032153">
    <property type="term" value="C:cell division site"/>
    <property type="evidence" value="ECO:0007669"/>
    <property type="project" value="TreeGrafter"/>
</dbReference>
<dbReference type="GO" id="GO:0030428">
    <property type="term" value="C:cell septum"/>
    <property type="evidence" value="ECO:0007669"/>
    <property type="project" value="TreeGrafter"/>
</dbReference>
<dbReference type="GO" id="GO:0005829">
    <property type="term" value="C:cytosol"/>
    <property type="evidence" value="ECO:0007669"/>
    <property type="project" value="TreeGrafter"/>
</dbReference>
<dbReference type="GO" id="GO:0005886">
    <property type="term" value="C:plasma membrane"/>
    <property type="evidence" value="ECO:0007669"/>
    <property type="project" value="UniProtKB-UniRule"/>
</dbReference>
<dbReference type="GO" id="GO:0000917">
    <property type="term" value="P:division septum assembly"/>
    <property type="evidence" value="ECO:0007669"/>
    <property type="project" value="UniProtKB-KW"/>
</dbReference>
<dbReference type="GO" id="GO:0043093">
    <property type="term" value="P:FtsZ-dependent cytokinesis"/>
    <property type="evidence" value="ECO:0007669"/>
    <property type="project" value="TreeGrafter"/>
</dbReference>
<dbReference type="GO" id="GO:0000921">
    <property type="term" value="P:septin ring assembly"/>
    <property type="evidence" value="ECO:0007669"/>
    <property type="project" value="TreeGrafter"/>
</dbReference>
<dbReference type="FunFam" id="1.20.5.50:FF:000001">
    <property type="entry name" value="Cell division protein ZapA"/>
    <property type="match status" value="1"/>
</dbReference>
<dbReference type="FunFam" id="3.30.160.880:FF:000001">
    <property type="entry name" value="Cell division protein ZapA"/>
    <property type="match status" value="1"/>
</dbReference>
<dbReference type="Gene3D" id="1.20.5.50">
    <property type="match status" value="1"/>
</dbReference>
<dbReference type="Gene3D" id="3.30.160.880">
    <property type="entry name" value="Cell division protein ZapA protomer, N-terminal domain"/>
    <property type="match status" value="1"/>
</dbReference>
<dbReference type="HAMAP" id="MF_02012">
    <property type="entry name" value="ZapA_type1"/>
    <property type="match status" value="1"/>
</dbReference>
<dbReference type="InterPro" id="IPR007838">
    <property type="entry name" value="Cell_div_ZapA-like"/>
</dbReference>
<dbReference type="InterPro" id="IPR036192">
    <property type="entry name" value="Cell_div_ZapA-like_sf"/>
</dbReference>
<dbReference type="InterPro" id="IPR023771">
    <property type="entry name" value="Cell_div_ZapA_eubact"/>
</dbReference>
<dbReference type="InterPro" id="IPR042233">
    <property type="entry name" value="Cell_div_ZapA_N"/>
</dbReference>
<dbReference type="NCBIfam" id="NF008209">
    <property type="entry name" value="PRK10972.1"/>
    <property type="match status" value="1"/>
</dbReference>
<dbReference type="PANTHER" id="PTHR34981">
    <property type="entry name" value="CELL DIVISION PROTEIN ZAPA"/>
    <property type="match status" value="1"/>
</dbReference>
<dbReference type="PANTHER" id="PTHR34981:SF1">
    <property type="entry name" value="CELL DIVISION PROTEIN ZAPA"/>
    <property type="match status" value="1"/>
</dbReference>
<dbReference type="Pfam" id="PF05164">
    <property type="entry name" value="ZapA"/>
    <property type="match status" value="1"/>
</dbReference>
<dbReference type="SUPFAM" id="SSF102829">
    <property type="entry name" value="Cell division protein ZapA-like"/>
    <property type="match status" value="1"/>
</dbReference>
<comment type="function">
    <text evidence="1">Activator of cell division through the inhibition of FtsZ GTPase activity, therefore promoting FtsZ assembly into bundles of protofilaments necessary for the formation of the division Z ring. It is recruited early at mid-cell but it is not essential for cell division.</text>
</comment>
<comment type="subunit">
    <text evidence="1">Homodimer. Interacts with FtsZ.</text>
</comment>
<comment type="subcellular location">
    <subcellularLocation>
        <location evidence="1">Cytoplasm</location>
    </subcellularLocation>
    <text evidence="1">Localizes at mid-cell.</text>
</comment>
<comment type="similarity">
    <text evidence="1">Belongs to the ZapA family. Type 1 subfamily.</text>
</comment>
<gene>
    <name evidence="1" type="primary">zapA</name>
    <name type="ordered locus">YPA_0355</name>
</gene>